<protein>
    <recommendedName>
        <fullName evidence="1">Eukaryotic translation initiation factor 3 subunit G-1</fullName>
    </recommendedName>
    <alternativeName>
        <fullName evidence="2">Eukaryotic translation initiation factor 3 RNA-binding subunit 1</fullName>
        <shortName evidence="2">eIF-3 RNA-binding subunit 1</shortName>
    </alternativeName>
    <alternativeName>
        <fullName evidence="2">Eukaryotic translation initiation factor 3 subunit 4-1</fullName>
    </alternativeName>
</protein>
<dbReference type="EMBL" id="CH954183">
    <property type="protein sequence ID" value="EDV45640.1"/>
    <property type="molecule type" value="Genomic_DNA"/>
</dbReference>
<dbReference type="SMR" id="B3P935"/>
<dbReference type="EnsemblMetazoa" id="FBtr0132659">
    <property type="protein sequence ID" value="FBpp0131151"/>
    <property type="gene ID" value="FBgn0104893"/>
</dbReference>
<dbReference type="EnsemblMetazoa" id="XM_001982635.3">
    <property type="protein sequence ID" value="XP_001982671.1"/>
    <property type="gene ID" value="LOC6555513"/>
</dbReference>
<dbReference type="GeneID" id="6555513"/>
<dbReference type="KEGG" id="der:6555513"/>
<dbReference type="CTD" id="31243"/>
<dbReference type="eggNOG" id="KOG0122">
    <property type="taxonomic scope" value="Eukaryota"/>
</dbReference>
<dbReference type="HOGENOM" id="CLU_034595_0_0_1"/>
<dbReference type="OMA" id="ICQGDHF"/>
<dbReference type="OrthoDB" id="639027at2759"/>
<dbReference type="PhylomeDB" id="B3P935"/>
<dbReference type="Proteomes" id="UP000008711">
    <property type="component" value="Unassembled WGS sequence"/>
</dbReference>
<dbReference type="GO" id="GO:0016282">
    <property type="term" value="C:eukaryotic 43S preinitiation complex"/>
    <property type="evidence" value="ECO:0007669"/>
    <property type="project" value="UniProtKB-UniRule"/>
</dbReference>
<dbReference type="GO" id="GO:0033290">
    <property type="term" value="C:eukaryotic 48S preinitiation complex"/>
    <property type="evidence" value="ECO:0007669"/>
    <property type="project" value="UniProtKB-UniRule"/>
</dbReference>
<dbReference type="GO" id="GO:0005852">
    <property type="term" value="C:eukaryotic translation initiation factor 3 complex"/>
    <property type="evidence" value="ECO:0007669"/>
    <property type="project" value="UniProtKB-UniRule"/>
</dbReference>
<dbReference type="GO" id="GO:0003723">
    <property type="term" value="F:RNA binding"/>
    <property type="evidence" value="ECO:0007669"/>
    <property type="project" value="UniProtKB-UniRule"/>
</dbReference>
<dbReference type="GO" id="GO:0003743">
    <property type="term" value="F:translation initiation factor activity"/>
    <property type="evidence" value="ECO:0007669"/>
    <property type="project" value="UniProtKB-UniRule"/>
</dbReference>
<dbReference type="GO" id="GO:0001732">
    <property type="term" value="P:formation of cytoplasmic translation initiation complex"/>
    <property type="evidence" value="ECO:0007669"/>
    <property type="project" value="UniProtKB-UniRule"/>
</dbReference>
<dbReference type="CDD" id="cd12933">
    <property type="entry name" value="eIF3G"/>
    <property type="match status" value="1"/>
</dbReference>
<dbReference type="CDD" id="cd12408">
    <property type="entry name" value="RRM_eIF3G_like"/>
    <property type="match status" value="1"/>
</dbReference>
<dbReference type="FunFam" id="3.30.70.330:FF:000828">
    <property type="entry name" value="Eukaryotic translation initiation factor 3 subunit G"/>
    <property type="match status" value="1"/>
</dbReference>
<dbReference type="Gene3D" id="3.30.70.330">
    <property type="match status" value="1"/>
</dbReference>
<dbReference type="HAMAP" id="MF_03006">
    <property type="entry name" value="eIF3g"/>
    <property type="match status" value="1"/>
</dbReference>
<dbReference type="InterPro" id="IPR017334">
    <property type="entry name" value="eIF3_g"/>
</dbReference>
<dbReference type="InterPro" id="IPR024675">
    <property type="entry name" value="eIF3g_N"/>
</dbReference>
<dbReference type="InterPro" id="IPR034240">
    <property type="entry name" value="eIF3G_RRM"/>
</dbReference>
<dbReference type="InterPro" id="IPR012677">
    <property type="entry name" value="Nucleotide-bd_a/b_plait_sf"/>
</dbReference>
<dbReference type="InterPro" id="IPR035979">
    <property type="entry name" value="RBD_domain_sf"/>
</dbReference>
<dbReference type="InterPro" id="IPR000504">
    <property type="entry name" value="RRM_dom"/>
</dbReference>
<dbReference type="PANTHER" id="PTHR10352">
    <property type="entry name" value="EUKARYOTIC TRANSLATION INITIATION FACTOR 3 SUBUNIT G"/>
    <property type="match status" value="1"/>
</dbReference>
<dbReference type="Pfam" id="PF12353">
    <property type="entry name" value="eIF3g"/>
    <property type="match status" value="1"/>
</dbReference>
<dbReference type="Pfam" id="PF00076">
    <property type="entry name" value="RRM_1"/>
    <property type="match status" value="1"/>
</dbReference>
<dbReference type="PIRSF" id="PIRSF037949">
    <property type="entry name" value="Transl_init_eIF-3_RNA-bind"/>
    <property type="match status" value="1"/>
</dbReference>
<dbReference type="SMART" id="SM00360">
    <property type="entry name" value="RRM"/>
    <property type="match status" value="1"/>
</dbReference>
<dbReference type="SUPFAM" id="SSF54928">
    <property type="entry name" value="RNA-binding domain, RBD"/>
    <property type="match status" value="1"/>
</dbReference>
<dbReference type="PROSITE" id="PS50102">
    <property type="entry name" value="RRM"/>
    <property type="match status" value="1"/>
</dbReference>
<proteinExistence type="inferred from homology"/>
<comment type="function">
    <text evidence="2">RNA-binding component of the eukaryotic translation initiation factor 3 (eIF-3) complex, which is involved in protein synthesis of a specialized repertoire of mRNAs and, together with other initiation factors, stimulates binding of mRNA and methionyl-tRNAi to the 40S ribosome. The eIF-3 complex specifically targets and initiates translation of a subset of mRNAs involved in cell proliferation. This subunit can bind 18S rRNA.</text>
</comment>
<comment type="subunit">
    <text evidence="2">Component of the eukaryotic translation initiation factor 3 (eIF-3) complex. The eIF-3 complex interacts with pix.</text>
</comment>
<comment type="subcellular location">
    <subcellularLocation>
        <location evidence="2">Cytoplasm</location>
    </subcellularLocation>
</comment>
<comment type="similarity">
    <text evidence="2">Belongs to the eIF-3 subunit G family.</text>
</comment>
<organism>
    <name type="scientific">Drosophila erecta</name>
    <name type="common">Fruit fly</name>
    <dbReference type="NCBI Taxonomy" id="7220"/>
    <lineage>
        <taxon>Eukaryota</taxon>
        <taxon>Metazoa</taxon>
        <taxon>Ecdysozoa</taxon>
        <taxon>Arthropoda</taxon>
        <taxon>Hexapoda</taxon>
        <taxon>Insecta</taxon>
        <taxon>Pterygota</taxon>
        <taxon>Neoptera</taxon>
        <taxon>Endopterygota</taxon>
        <taxon>Diptera</taxon>
        <taxon>Brachycera</taxon>
        <taxon>Muscomorpha</taxon>
        <taxon>Ephydroidea</taxon>
        <taxon>Drosophilidae</taxon>
        <taxon>Drosophila</taxon>
        <taxon>Sophophora</taxon>
    </lineage>
</organism>
<feature type="chain" id="PRO_0000365409" description="Eukaryotic translation initiation factor 3 subunit G-1">
    <location>
        <begin position="1"/>
        <end position="269"/>
    </location>
</feature>
<feature type="domain" description="RRM" evidence="2">
    <location>
        <begin position="188"/>
        <end position="266"/>
    </location>
</feature>
<accession>B3P935</accession>
<sequence length="269" mass="29951">MPGVETIKSSWADEVELDYGGLPPTTETVENGHKYVTEYKYNKDDKKTKVVRTYKISKQVVPKTVAKRRTWTKFGESKNDKPGPNSQTTMVSEEIIMQFLNSKEDEKANDPLLDPTKNIAKCRICNGEHWSVNCPYKGTAMDTNLMEKKASAAAAAAVDAPKSGKYVPPFLKDSQKGALGMRGRDDTAAIRISNLSESMTEADLEELVKKIGPQSKMYLARDKNTGLCKGFAYVHFKQRKDAAAAIEILNGHGYDHLILSVEWSKPQNN</sequence>
<evidence type="ECO:0000250" key="1">
    <source>
        <dbReference type="UniProtKB" id="Q9W4X7"/>
    </source>
</evidence>
<evidence type="ECO:0000255" key="2">
    <source>
        <dbReference type="HAMAP-Rule" id="MF_03006"/>
    </source>
</evidence>
<gene>
    <name evidence="1" type="primary">eIF3g1</name>
    <name evidence="2" type="synonym">eIF3-S4</name>
    <name evidence="1" type="synonym">eIF3ga</name>
    <name type="ORF">GG12605</name>
</gene>
<reference key="1">
    <citation type="journal article" date="2007" name="Nature">
        <title>Evolution of genes and genomes on the Drosophila phylogeny.</title>
        <authorList>
            <consortium name="Drosophila 12 genomes consortium"/>
        </authorList>
    </citation>
    <scope>NUCLEOTIDE SEQUENCE [LARGE SCALE GENOMIC DNA]</scope>
    <source>
        <strain>Tucson 14021-0224.01</strain>
    </source>
</reference>
<keyword id="KW-0963">Cytoplasm</keyword>
<keyword id="KW-0396">Initiation factor</keyword>
<keyword id="KW-0648">Protein biosynthesis</keyword>
<keyword id="KW-0694">RNA-binding</keyword>
<name>EI3G1_DROER</name>